<evidence type="ECO:0000255" key="1">
    <source>
        <dbReference type="HAMAP-Rule" id="MF_00057"/>
    </source>
</evidence>
<name>KDSB_ECO24</name>
<protein>
    <recommendedName>
        <fullName evidence="1">3-deoxy-manno-octulosonate cytidylyltransferase</fullName>
        <ecNumber evidence="1">2.7.7.38</ecNumber>
    </recommendedName>
    <alternativeName>
        <fullName evidence="1">CMP-2-keto-3-deoxyoctulosonic acid synthase</fullName>
        <shortName evidence="1">CKS</shortName>
        <shortName evidence="1">CMP-KDO synthase</shortName>
    </alternativeName>
</protein>
<dbReference type="EC" id="2.7.7.38" evidence="1"/>
<dbReference type="EMBL" id="CP000800">
    <property type="protein sequence ID" value="ABV20573.1"/>
    <property type="molecule type" value="Genomic_DNA"/>
</dbReference>
<dbReference type="RefSeq" id="WP_000011590.1">
    <property type="nucleotide sequence ID" value="NC_009801.1"/>
</dbReference>
<dbReference type="SMR" id="A7ZK07"/>
<dbReference type="KEGG" id="ecw:EcE24377A_1016"/>
<dbReference type="HOGENOM" id="CLU_065038_1_0_6"/>
<dbReference type="UniPathway" id="UPA00030"/>
<dbReference type="UniPathway" id="UPA00358">
    <property type="reaction ID" value="UER00476"/>
</dbReference>
<dbReference type="Proteomes" id="UP000001122">
    <property type="component" value="Chromosome"/>
</dbReference>
<dbReference type="GO" id="GO:0005829">
    <property type="term" value="C:cytosol"/>
    <property type="evidence" value="ECO:0007669"/>
    <property type="project" value="TreeGrafter"/>
</dbReference>
<dbReference type="GO" id="GO:0008690">
    <property type="term" value="F:3-deoxy-manno-octulosonate cytidylyltransferase activity"/>
    <property type="evidence" value="ECO:0007669"/>
    <property type="project" value="UniProtKB-UniRule"/>
</dbReference>
<dbReference type="GO" id="GO:0033468">
    <property type="term" value="P:CMP-keto-3-deoxy-D-manno-octulosonic acid biosynthetic process"/>
    <property type="evidence" value="ECO:0007669"/>
    <property type="project" value="UniProtKB-UniRule"/>
</dbReference>
<dbReference type="GO" id="GO:0009103">
    <property type="term" value="P:lipopolysaccharide biosynthetic process"/>
    <property type="evidence" value="ECO:0007669"/>
    <property type="project" value="UniProtKB-UniRule"/>
</dbReference>
<dbReference type="CDD" id="cd02517">
    <property type="entry name" value="CMP-KDO-Synthetase"/>
    <property type="match status" value="1"/>
</dbReference>
<dbReference type="FunFam" id="3.90.550.10:FF:000011">
    <property type="entry name" value="3-deoxy-manno-octulosonate cytidylyltransferase"/>
    <property type="match status" value="1"/>
</dbReference>
<dbReference type="Gene3D" id="3.90.550.10">
    <property type="entry name" value="Spore Coat Polysaccharide Biosynthesis Protein SpsA, Chain A"/>
    <property type="match status" value="1"/>
</dbReference>
<dbReference type="HAMAP" id="MF_00057">
    <property type="entry name" value="KdsB"/>
    <property type="match status" value="1"/>
</dbReference>
<dbReference type="InterPro" id="IPR003329">
    <property type="entry name" value="Cytidylyl_trans"/>
</dbReference>
<dbReference type="InterPro" id="IPR004528">
    <property type="entry name" value="KdsB"/>
</dbReference>
<dbReference type="InterPro" id="IPR029044">
    <property type="entry name" value="Nucleotide-diphossugar_trans"/>
</dbReference>
<dbReference type="NCBIfam" id="TIGR00466">
    <property type="entry name" value="kdsB"/>
    <property type="match status" value="1"/>
</dbReference>
<dbReference type="NCBIfam" id="NF003950">
    <property type="entry name" value="PRK05450.1-3"/>
    <property type="match status" value="1"/>
</dbReference>
<dbReference type="NCBIfam" id="NF003952">
    <property type="entry name" value="PRK05450.1-5"/>
    <property type="match status" value="1"/>
</dbReference>
<dbReference type="NCBIfam" id="NF009905">
    <property type="entry name" value="PRK13368.1"/>
    <property type="match status" value="1"/>
</dbReference>
<dbReference type="PANTHER" id="PTHR42866">
    <property type="entry name" value="3-DEOXY-MANNO-OCTULOSONATE CYTIDYLYLTRANSFERASE"/>
    <property type="match status" value="1"/>
</dbReference>
<dbReference type="PANTHER" id="PTHR42866:SF2">
    <property type="entry name" value="3-DEOXY-MANNO-OCTULOSONATE CYTIDYLYLTRANSFERASE, MITOCHONDRIAL"/>
    <property type="match status" value="1"/>
</dbReference>
<dbReference type="Pfam" id="PF02348">
    <property type="entry name" value="CTP_transf_3"/>
    <property type="match status" value="1"/>
</dbReference>
<dbReference type="SUPFAM" id="SSF53448">
    <property type="entry name" value="Nucleotide-diphospho-sugar transferases"/>
    <property type="match status" value="1"/>
</dbReference>
<organism>
    <name type="scientific">Escherichia coli O139:H28 (strain E24377A / ETEC)</name>
    <dbReference type="NCBI Taxonomy" id="331111"/>
    <lineage>
        <taxon>Bacteria</taxon>
        <taxon>Pseudomonadati</taxon>
        <taxon>Pseudomonadota</taxon>
        <taxon>Gammaproteobacteria</taxon>
        <taxon>Enterobacterales</taxon>
        <taxon>Enterobacteriaceae</taxon>
        <taxon>Escherichia</taxon>
    </lineage>
</organism>
<keyword id="KW-0963">Cytoplasm</keyword>
<keyword id="KW-0448">Lipopolysaccharide biosynthesis</keyword>
<keyword id="KW-0548">Nucleotidyltransferase</keyword>
<keyword id="KW-1185">Reference proteome</keyword>
<keyword id="KW-0808">Transferase</keyword>
<proteinExistence type="inferred from homology"/>
<reference key="1">
    <citation type="journal article" date="2008" name="J. Bacteriol.">
        <title>The pangenome structure of Escherichia coli: comparative genomic analysis of E. coli commensal and pathogenic isolates.</title>
        <authorList>
            <person name="Rasko D.A."/>
            <person name="Rosovitz M.J."/>
            <person name="Myers G.S.A."/>
            <person name="Mongodin E.F."/>
            <person name="Fricke W.F."/>
            <person name="Gajer P."/>
            <person name="Crabtree J."/>
            <person name="Sebaihia M."/>
            <person name="Thomson N.R."/>
            <person name="Chaudhuri R."/>
            <person name="Henderson I.R."/>
            <person name="Sperandio V."/>
            <person name="Ravel J."/>
        </authorList>
    </citation>
    <scope>NUCLEOTIDE SEQUENCE [LARGE SCALE GENOMIC DNA]</scope>
    <source>
        <strain>E24377A / ETEC</strain>
    </source>
</reference>
<accession>A7ZK07</accession>
<feature type="chain" id="PRO_1000057400" description="3-deoxy-manno-octulosonate cytidylyltransferase">
    <location>
        <begin position="1"/>
        <end position="248"/>
    </location>
</feature>
<gene>
    <name evidence="1" type="primary">kdsB</name>
    <name type="ordered locus">EcE24377A_1016</name>
</gene>
<sequence>MSFVVIIPARYASTRLPGKPLVDINGKPMIVHVLERARESGADRIIVATDHEDVARAVEAAGGEVCMTRADHQSGTERLAEVVEKCAFSDDTVIVNVQGDEPMIPATIIRQVADNLAQRQVGMATLAVPIHNAEEAFNPNAVKVVLDAEGYALYFSRATIPWDRDRFAEGLETVGDNFLRHLGIYGYRAGFIRRYVNWQPSPLEHIEMLEQLRVLWYGEKIHVAVAQEVPGTGVDTPEDLERVRAEMR</sequence>
<comment type="function">
    <text evidence="1">Activates KDO (a required 8-carbon sugar) for incorporation into bacterial lipopolysaccharide in Gram-negative bacteria.</text>
</comment>
<comment type="catalytic activity">
    <reaction evidence="1">
        <text>3-deoxy-alpha-D-manno-oct-2-ulosonate + CTP = CMP-3-deoxy-beta-D-manno-octulosonate + diphosphate</text>
        <dbReference type="Rhea" id="RHEA:23448"/>
        <dbReference type="ChEBI" id="CHEBI:33019"/>
        <dbReference type="ChEBI" id="CHEBI:37563"/>
        <dbReference type="ChEBI" id="CHEBI:85986"/>
        <dbReference type="ChEBI" id="CHEBI:85987"/>
        <dbReference type="EC" id="2.7.7.38"/>
    </reaction>
</comment>
<comment type="pathway">
    <text evidence="1">Nucleotide-sugar biosynthesis; CMP-3-deoxy-D-manno-octulosonate biosynthesis; CMP-3-deoxy-D-manno-octulosonate from 3-deoxy-D-manno-octulosonate and CTP: step 1/1.</text>
</comment>
<comment type="pathway">
    <text evidence="1">Bacterial outer membrane biogenesis; lipopolysaccharide biosynthesis.</text>
</comment>
<comment type="subcellular location">
    <subcellularLocation>
        <location evidence="1">Cytoplasm</location>
    </subcellularLocation>
</comment>
<comment type="similarity">
    <text evidence="1">Belongs to the KdsB family.</text>
</comment>